<reference key="1">
    <citation type="journal article" date="2009" name="BMC Genomics">
        <title>Evidence for niche adaptation in the genome of the bovine pathogen Streptococcus uberis.</title>
        <authorList>
            <person name="Ward P.N."/>
            <person name="Holden M.T.G."/>
            <person name="Leigh J.A."/>
            <person name="Lennard N."/>
            <person name="Bignell A."/>
            <person name="Barron A."/>
            <person name="Clark L."/>
            <person name="Quail M.A."/>
            <person name="Woodward J."/>
            <person name="Barrell B.G."/>
            <person name="Egan S.A."/>
            <person name="Field T.R."/>
            <person name="Maskell D."/>
            <person name="Kehoe M."/>
            <person name="Dowson C.G."/>
            <person name="Chanter N."/>
            <person name="Whatmore A.M."/>
            <person name="Bentley S.D."/>
            <person name="Parkhill J."/>
        </authorList>
    </citation>
    <scope>NUCLEOTIDE SEQUENCE [LARGE SCALE GENOMIC DNA]</scope>
    <source>
        <strain>ATCC BAA-854 / 0140J</strain>
    </source>
</reference>
<accession>B9DRE8</accession>
<protein>
    <recommendedName>
        <fullName evidence="1">Large ribosomal subunit protein uL11</fullName>
    </recommendedName>
    <alternativeName>
        <fullName evidence="2">50S ribosomal protein L11</fullName>
    </alternativeName>
</protein>
<sequence length="141" mass="14872">MAKKVEKLVKLQIPAGKATPAPPVGPALGQAGINIMGFTKEFNARTADQAGMIIPVVITVYEDKSFDFITKTPPAAVLLKKAAGVEKGSGTPNKTKVATVTRAQVQEIAETKMPDLNAANLESAMRMIEGTARSMGFTITD</sequence>
<proteinExistence type="inferred from homology"/>
<keyword id="KW-0488">Methylation</keyword>
<keyword id="KW-1185">Reference proteome</keyword>
<keyword id="KW-0687">Ribonucleoprotein</keyword>
<keyword id="KW-0689">Ribosomal protein</keyword>
<keyword id="KW-0694">RNA-binding</keyword>
<keyword id="KW-0699">rRNA-binding</keyword>
<dbReference type="EMBL" id="AM946015">
    <property type="protein sequence ID" value="CAR41190.1"/>
    <property type="molecule type" value="Genomic_DNA"/>
</dbReference>
<dbReference type="RefSeq" id="WP_012658013.1">
    <property type="nucleotide sequence ID" value="NC_012004.1"/>
</dbReference>
<dbReference type="SMR" id="B9DRE8"/>
<dbReference type="STRING" id="218495.SUB0481"/>
<dbReference type="KEGG" id="sub:SUB0481"/>
<dbReference type="eggNOG" id="COG0080">
    <property type="taxonomic scope" value="Bacteria"/>
</dbReference>
<dbReference type="HOGENOM" id="CLU_074237_2_1_9"/>
<dbReference type="OrthoDB" id="9802408at2"/>
<dbReference type="Proteomes" id="UP000000449">
    <property type="component" value="Chromosome"/>
</dbReference>
<dbReference type="GO" id="GO:0022625">
    <property type="term" value="C:cytosolic large ribosomal subunit"/>
    <property type="evidence" value="ECO:0007669"/>
    <property type="project" value="TreeGrafter"/>
</dbReference>
<dbReference type="GO" id="GO:0070180">
    <property type="term" value="F:large ribosomal subunit rRNA binding"/>
    <property type="evidence" value="ECO:0007669"/>
    <property type="project" value="UniProtKB-UniRule"/>
</dbReference>
<dbReference type="GO" id="GO:0003735">
    <property type="term" value="F:structural constituent of ribosome"/>
    <property type="evidence" value="ECO:0007669"/>
    <property type="project" value="InterPro"/>
</dbReference>
<dbReference type="GO" id="GO:0006412">
    <property type="term" value="P:translation"/>
    <property type="evidence" value="ECO:0007669"/>
    <property type="project" value="UniProtKB-UniRule"/>
</dbReference>
<dbReference type="CDD" id="cd00349">
    <property type="entry name" value="Ribosomal_L11"/>
    <property type="match status" value="1"/>
</dbReference>
<dbReference type="FunFam" id="1.10.10.250:FF:000001">
    <property type="entry name" value="50S ribosomal protein L11"/>
    <property type="match status" value="1"/>
</dbReference>
<dbReference type="FunFam" id="3.30.1550.10:FF:000001">
    <property type="entry name" value="50S ribosomal protein L11"/>
    <property type="match status" value="1"/>
</dbReference>
<dbReference type="Gene3D" id="1.10.10.250">
    <property type="entry name" value="Ribosomal protein L11, C-terminal domain"/>
    <property type="match status" value="1"/>
</dbReference>
<dbReference type="Gene3D" id="3.30.1550.10">
    <property type="entry name" value="Ribosomal protein L11/L12, N-terminal domain"/>
    <property type="match status" value="1"/>
</dbReference>
<dbReference type="HAMAP" id="MF_00736">
    <property type="entry name" value="Ribosomal_uL11"/>
    <property type="match status" value="1"/>
</dbReference>
<dbReference type="InterPro" id="IPR000911">
    <property type="entry name" value="Ribosomal_uL11"/>
</dbReference>
<dbReference type="InterPro" id="IPR006519">
    <property type="entry name" value="Ribosomal_uL11_bac-typ"/>
</dbReference>
<dbReference type="InterPro" id="IPR020783">
    <property type="entry name" value="Ribosomal_uL11_C"/>
</dbReference>
<dbReference type="InterPro" id="IPR036769">
    <property type="entry name" value="Ribosomal_uL11_C_sf"/>
</dbReference>
<dbReference type="InterPro" id="IPR020785">
    <property type="entry name" value="Ribosomal_uL11_CS"/>
</dbReference>
<dbReference type="InterPro" id="IPR020784">
    <property type="entry name" value="Ribosomal_uL11_N"/>
</dbReference>
<dbReference type="InterPro" id="IPR036796">
    <property type="entry name" value="Ribosomal_uL11_N_sf"/>
</dbReference>
<dbReference type="NCBIfam" id="TIGR01632">
    <property type="entry name" value="L11_bact"/>
    <property type="match status" value="1"/>
</dbReference>
<dbReference type="PANTHER" id="PTHR11661">
    <property type="entry name" value="60S RIBOSOMAL PROTEIN L12"/>
    <property type="match status" value="1"/>
</dbReference>
<dbReference type="PANTHER" id="PTHR11661:SF1">
    <property type="entry name" value="LARGE RIBOSOMAL SUBUNIT PROTEIN UL11M"/>
    <property type="match status" value="1"/>
</dbReference>
<dbReference type="Pfam" id="PF00298">
    <property type="entry name" value="Ribosomal_L11"/>
    <property type="match status" value="1"/>
</dbReference>
<dbReference type="Pfam" id="PF03946">
    <property type="entry name" value="Ribosomal_L11_N"/>
    <property type="match status" value="1"/>
</dbReference>
<dbReference type="SMART" id="SM00649">
    <property type="entry name" value="RL11"/>
    <property type="match status" value="1"/>
</dbReference>
<dbReference type="SUPFAM" id="SSF54747">
    <property type="entry name" value="Ribosomal L11/L12e N-terminal domain"/>
    <property type="match status" value="1"/>
</dbReference>
<dbReference type="SUPFAM" id="SSF46906">
    <property type="entry name" value="Ribosomal protein L11, C-terminal domain"/>
    <property type="match status" value="1"/>
</dbReference>
<dbReference type="PROSITE" id="PS00359">
    <property type="entry name" value="RIBOSOMAL_L11"/>
    <property type="match status" value="1"/>
</dbReference>
<comment type="function">
    <text evidence="1">Forms part of the ribosomal stalk which helps the ribosome interact with GTP-bound translation factors.</text>
</comment>
<comment type="subunit">
    <text evidence="1">Part of the ribosomal stalk of the 50S ribosomal subunit. Interacts with L10 and the large rRNA to form the base of the stalk. L10 forms an elongated spine to which L12 dimers bind in a sequential fashion forming a multimeric L10(L12)X complex.</text>
</comment>
<comment type="PTM">
    <text evidence="1">One or more lysine residues are methylated.</text>
</comment>
<comment type="similarity">
    <text evidence="1">Belongs to the universal ribosomal protein uL11 family.</text>
</comment>
<organism>
    <name type="scientific">Streptococcus uberis (strain ATCC BAA-854 / 0140J)</name>
    <dbReference type="NCBI Taxonomy" id="218495"/>
    <lineage>
        <taxon>Bacteria</taxon>
        <taxon>Bacillati</taxon>
        <taxon>Bacillota</taxon>
        <taxon>Bacilli</taxon>
        <taxon>Lactobacillales</taxon>
        <taxon>Streptococcaceae</taxon>
        <taxon>Streptococcus</taxon>
    </lineage>
</organism>
<gene>
    <name evidence="1" type="primary">rplK</name>
    <name type="ordered locus">SUB0481</name>
</gene>
<name>RL11_STRU0</name>
<evidence type="ECO:0000255" key="1">
    <source>
        <dbReference type="HAMAP-Rule" id="MF_00736"/>
    </source>
</evidence>
<evidence type="ECO:0000305" key="2"/>
<feature type="chain" id="PRO_1000195731" description="Large ribosomal subunit protein uL11">
    <location>
        <begin position="1"/>
        <end position="141"/>
    </location>
</feature>